<proteinExistence type="inferred from homology"/>
<name>ARNA_SALHS</name>
<evidence type="ECO:0000255" key="1">
    <source>
        <dbReference type="HAMAP-Rule" id="MF_01166"/>
    </source>
</evidence>
<keyword id="KW-0046">Antibiotic resistance</keyword>
<keyword id="KW-0441">Lipid A biosynthesis</keyword>
<keyword id="KW-0444">Lipid biosynthesis</keyword>
<keyword id="KW-0443">Lipid metabolism</keyword>
<keyword id="KW-0448">Lipopolysaccharide biosynthesis</keyword>
<keyword id="KW-0511">Multifunctional enzyme</keyword>
<keyword id="KW-0520">NAD</keyword>
<keyword id="KW-0560">Oxidoreductase</keyword>
<keyword id="KW-0808">Transferase</keyword>
<gene>
    <name evidence="1" type="primary">arnA</name>
    <name type="ordered locus">SeHA_C2539</name>
</gene>
<accession>B4TBG6</accession>
<reference key="1">
    <citation type="journal article" date="2011" name="J. Bacteriol.">
        <title>Comparative genomics of 28 Salmonella enterica isolates: evidence for CRISPR-mediated adaptive sublineage evolution.</title>
        <authorList>
            <person name="Fricke W.F."/>
            <person name="Mammel M.K."/>
            <person name="McDermott P.F."/>
            <person name="Tartera C."/>
            <person name="White D.G."/>
            <person name="Leclerc J.E."/>
            <person name="Ravel J."/>
            <person name="Cebula T.A."/>
        </authorList>
    </citation>
    <scope>NUCLEOTIDE SEQUENCE [LARGE SCALE GENOMIC DNA]</scope>
    <source>
        <strain>SL476</strain>
    </source>
</reference>
<feature type="chain" id="PRO_1000137949" description="Bifunctional polymyxin resistance protein ArnA">
    <location>
        <begin position="1"/>
        <end position="660"/>
    </location>
</feature>
<feature type="region of interest" description="Formyltransferase ArnAFT">
    <location>
        <begin position="1"/>
        <end position="304"/>
    </location>
</feature>
<feature type="region of interest" description="Dehydrogenase ArnADH">
    <location>
        <begin position="314"/>
        <end position="660"/>
    </location>
</feature>
<feature type="active site" description="Proton donor; for formyltransferase activity" evidence="1">
    <location>
        <position position="104"/>
    </location>
</feature>
<feature type="active site" description="Proton acceptor; for decarboxylase activity" evidence="1">
    <location>
        <position position="434"/>
    </location>
</feature>
<feature type="active site" description="Proton donor; for decarboxylase activity" evidence="1">
    <location>
        <position position="619"/>
    </location>
</feature>
<feature type="binding site" evidence="1">
    <location>
        <position position="114"/>
    </location>
    <ligand>
        <name>(6R)-10-formyltetrahydrofolate</name>
        <dbReference type="ChEBI" id="CHEBI:195366"/>
    </ligand>
</feature>
<feature type="binding site" evidence="1">
    <location>
        <begin position="136"/>
        <end position="140"/>
    </location>
    <ligand>
        <name>(6R)-10-formyltetrahydrofolate</name>
        <dbReference type="ChEBI" id="CHEBI:195366"/>
    </ligand>
</feature>
<feature type="binding site" evidence="1">
    <location>
        <position position="347"/>
    </location>
    <ligand>
        <name>NAD(+)</name>
        <dbReference type="ChEBI" id="CHEBI:57540"/>
    </ligand>
</feature>
<feature type="binding site" evidence="1">
    <location>
        <begin position="368"/>
        <end position="369"/>
    </location>
    <ligand>
        <name>NAD(+)</name>
        <dbReference type="ChEBI" id="CHEBI:57540"/>
    </ligand>
</feature>
<feature type="binding site" evidence="1">
    <location>
        <position position="393"/>
    </location>
    <ligand>
        <name>UDP-alpha-D-glucuronate</name>
        <dbReference type="ChEBI" id="CHEBI:58052"/>
    </ligand>
</feature>
<feature type="binding site" evidence="1">
    <location>
        <position position="398"/>
    </location>
    <ligand>
        <name>UDP-alpha-D-glucuronate</name>
        <dbReference type="ChEBI" id="CHEBI:58052"/>
    </ligand>
</feature>
<feature type="binding site" evidence="1">
    <location>
        <begin position="432"/>
        <end position="433"/>
    </location>
    <ligand>
        <name>UDP-alpha-D-glucuronate</name>
        <dbReference type="ChEBI" id="CHEBI:58052"/>
    </ligand>
</feature>
<feature type="binding site" evidence="1">
    <location>
        <position position="460"/>
    </location>
    <ligand>
        <name>UDP-alpha-D-glucuronate</name>
        <dbReference type="ChEBI" id="CHEBI:58052"/>
    </ligand>
</feature>
<feature type="binding site" evidence="1">
    <location>
        <position position="492"/>
    </location>
    <ligand>
        <name>UDP-alpha-D-glucuronate</name>
        <dbReference type="ChEBI" id="CHEBI:58052"/>
    </ligand>
</feature>
<feature type="binding site" evidence="1">
    <location>
        <begin position="526"/>
        <end position="535"/>
    </location>
    <ligand>
        <name>UDP-alpha-D-glucuronate</name>
        <dbReference type="ChEBI" id="CHEBI:58052"/>
    </ligand>
</feature>
<feature type="binding site" evidence="1">
    <location>
        <position position="613"/>
    </location>
    <ligand>
        <name>UDP-alpha-D-glucuronate</name>
        <dbReference type="ChEBI" id="CHEBI:58052"/>
    </ligand>
</feature>
<feature type="site" description="Transition state stabilizer" evidence="1">
    <location>
        <position position="102"/>
    </location>
</feature>
<feature type="site" description="Raises pKa of active site His" evidence="1">
    <location>
        <position position="140"/>
    </location>
</feature>
<protein>
    <recommendedName>
        <fullName evidence="1">Bifunctional polymyxin resistance protein ArnA</fullName>
    </recommendedName>
    <domain>
        <recommendedName>
            <fullName evidence="1">UDP-4-amino-4-deoxy-L-arabinose formyltransferase</fullName>
            <ecNumber evidence="1">2.1.2.13</ecNumber>
        </recommendedName>
        <alternativeName>
            <fullName evidence="1">ArnAFT</fullName>
        </alternativeName>
        <alternativeName>
            <fullName evidence="1">UDP-L-Ara4N formyltransferase</fullName>
        </alternativeName>
    </domain>
    <domain>
        <recommendedName>
            <fullName evidence="1">UDP-glucuronic acid oxidase, UDP-4-keto-hexauronic acid decarboxylating</fullName>
            <ecNumber evidence="1">1.1.1.305</ecNumber>
        </recommendedName>
        <alternativeName>
            <fullName evidence="1">ArnADH</fullName>
        </alternativeName>
        <alternativeName>
            <fullName evidence="1">UDP-GlcUA decarboxylase</fullName>
        </alternativeName>
        <alternativeName>
            <fullName evidence="1">UDP-glucuronic acid dehydrogenase</fullName>
        </alternativeName>
    </domain>
</protein>
<dbReference type="EC" id="2.1.2.13" evidence="1"/>
<dbReference type="EC" id="1.1.1.305" evidence="1"/>
<dbReference type="EMBL" id="CP001120">
    <property type="protein sequence ID" value="ACF68086.1"/>
    <property type="molecule type" value="Genomic_DNA"/>
</dbReference>
<dbReference type="RefSeq" id="WP_000648770.1">
    <property type="nucleotide sequence ID" value="NC_011083.1"/>
</dbReference>
<dbReference type="SMR" id="B4TBG6"/>
<dbReference type="KEGG" id="seh:SeHA_C2539"/>
<dbReference type="HOGENOM" id="CLU_007383_23_2_6"/>
<dbReference type="UniPathway" id="UPA00030"/>
<dbReference type="UniPathway" id="UPA00032">
    <property type="reaction ID" value="UER00492"/>
</dbReference>
<dbReference type="UniPathway" id="UPA00032">
    <property type="reaction ID" value="UER00494"/>
</dbReference>
<dbReference type="Proteomes" id="UP000001866">
    <property type="component" value="Chromosome"/>
</dbReference>
<dbReference type="GO" id="GO:0016020">
    <property type="term" value="C:membrane"/>
    <property type="evidence" value="ECO:0007669"/>
    <property type="project" value="GOC"/>
</dbReference>
<dbReference type="GO" id="GO:0016831">
    <property type="term" value="F:carboxy-lyase activity"/>
    <property type="evidence" value="ECO:0007669"/>
    <property type="project" value="InterPro"/>
</dbReference>
<dbReference type="GO" id="GO:0099619">
    <property type="term" value="F:UDP-4-amino-4-deoxy-L-arabinose formyltransferase activity"/>
    <property type="evidence" value="ECO:0007669"/>
    <property type="project" value="UniProtKB-EC"/>
</dbReference>
<dbReference type="GO" id="GO:0099618">
    <property type="term" value="F:UDP-glucuronate dehydrogenase activity"/>
    <property type="evidence" value="ECO:0007669"/>
    <property type="project" value="UniProtKB-EC"/>
</dbReference>
<dbReference type="GO" id="GO:0009245">
    <property type="term" value="P:lipid A biosynthetic process"/>
    <property type="evidence" value="ECO:0007669"/>
    <property type="project" value="UniProtKB-KW"/>
</dbReference>
<dbReference type="GO" id="GO:0009103">
    <property type="term" value="P:lipopolysaccharide biosynthetic process"/>
    <property type="evidence" value="ECO:0007669"/>
    <property type="project" value="UniProtKB-UniRule"/>
</dbReference>
<dbReference type="GO" id="GO:0046677">
    <property type="term" value="P:response to antibiotic"/>
    <property type="evidence" value="ECO:0007669"/>
    <property type="project" value="UniProtKB-KW"/>
</dbReference>
<dbReference type="CDD" id="cd08702">
    <property type="entry name" value="Arna_FMT_C"/>
    <property type="match status" value="1"/>
</dbReference>
<dbReference type="CDD" id="cd05257">
    <property type="entry name" value="Arna_like_SDR_e"/>
    <property type="match status" value="1"/>
</dbReference>
<dbReference type="FunFam" id="3.40.50.720:FF:000197">
    <property type="entry name" value="Bifunctional polymyxin resistance protein ArnA"/>
    <property type="match status" value="1"/>
</dbReference>
<dbReference type="Gene3D" id="3.40.50.12230">
    <property type="match status" value="1"/>
</dbReference>
<dbReference type="Gene3D" id="3.40.50.720">
    <property type="entry name" value="NAD(P)-binding Rossmann-like Domain"/>
    <property type="match status" value="1"/>
</dbReference>
<dbReference type="HAMAP" id="MF_01166">
    <property type="entry name" value="ArnA"/>
    <property type="match status" value="1"/>
</dbReference>
<dbReference type="InterPro" id="IPR045869">
    <property type="entry name" value="Arna-like_SDR_e"/>
</dbReference>
<dbReference type="InterPro" id="IPR021168">
    <property type="entry name" value="Bifun_polymyxin_resist_ArnA"/>
</dbReference>
<dbReference type="InterPro" id="IPR001509">
    <property type="entry name" value="Epimerase_deHydtase"/>
</dbReference>
<dbReference type="InterPro" id="IPR005793">
    <property type="entry name" value="Formyl_trans_C"/>
</dbReference>
<dbReference type="InterPro" id="IPR002376">
    <property type="entry name" value="Formyl_transf_N"/>
</dbReference>
<dbReference type="InterPro" id="IPR036477">
    <property type="entry name" value="Formyl_transf_N_sf"/>
</dbReference>
<dbReference type="InterPro" id="IPR011034">
    <property type="entry name" value="Formyl_transferase-like_C_sf"/>
</dbReference>
<dbReference type="InterPro" id="IPR050177">
    <property type="entry name" value="Lipid_A_modif_metabolic_enz"/>
</dbReference>
<dbReference type="InterPro" id="IPR036291">
    <property type="entry name" value="NAD(P)-bd_dom_sf"/>
</dbReference>
<dbReference type="NCBIfam" id="NF005414">
    <property type="entry name" value="PRK06988.1"/>
    <property type="match status" value="1"/>
</dbReference>
<dbReference type="NCBIfam" id="NF005998">
    <property type="entry name" value="PRK08125.1"/>
    <property type="match status" value="1"/>
</dbReference>
<dbReference type="NCBIfam" id="NF008872">
    <property type="entry name" value="PRK11908.1"/>
    <property type="match status" value="1"/>
</dbReference>
<dbReference type="PANTHER" id="PTHR43245">
    <property type="entry name" value="BIFUNCTIONAL POLYMYXIN RESISTANCE PROTEIN ARNA"/>
    <property type="match status" value="1"/>
</dbReference>
<dbReference type="PANTHER" id="PTHR43245:SF13">
    <property type="entry name" value="UDP-D-APIOSE_UDP-D-XYLOSE SYNTHASE 2"/>
    <property type="match status" value="1"/>
</dbReference>
<dbReference type="Pfam" id="PF01370">
    <property type="entry name" value="Epimerase"/>
    <property type="match status" value="1"/>
</dbReference>
<dbReference type="Pfam" id="PF02911">
    <property type="entry name" value="Formyl_trans_C"/>
    <property type="match status" value="1"/>
</dbReference>
<dbReference type="Pfam" id="PF00551">
    <property type="entry name" value="Formyl_trans_N"/>
    <property type="match status" value="1"/>
</dbReference>
<dbReference type="PIRSF" id="PIRSF036506">
    <property type="entry name" value="Bifun_polymyxin_resist_ArnA"/>
    <property type="match status" value="1"/>
</dbReference>
<dbReference type="SUPFAM" id="SSF50486">
    <property type="entry name" value="FMT C-terminal domain-like"/>
    <property type="match status" value="1"/>
</dbReference>
<dbReference type="SUPFAM" id="SSF53328">
    <property type="entry name" value="Formyltransferase"/>
    <property type="match status" value="1"/>
</dbReference>
<dbReference type="SUPFAM" id="SSF51735">
    <property type="entry name" value="NAD(P)-binding Rossmann-fold domains"/>
    <property type="match status" value="1"/>
</dbReference>
<organism>
    <name type="scientific">Salmonella heidelberg (strain SL476)</name>
    <dbReference type="NCBI Taxonomy" id="454169"/>
    <lineage>
        <taxon>Bacteria</taxon>
        <taxon>Pseudomonadati</taxon>
        <taxon>Pseudomonadota</taxon>
        <taxon>Gammaproteobacteria</taxon>
        <taxon>Enterobacterales</taxon>
        <taxon>Enterobacteriaceae</taxon>
        <taxon>Salmonella</taxon>
    </lineage>
</organism>
<comment type="function">
    <text evidence="1">Bifunctional enzyme that catalyzes the oxidative decarboxylation of UDP-glucuronic acid (UDP-GlcUA) to UDP-4-keto-arabinose (UDP-Ara4O) and the addition of a formyl group to UDP-4-amino-4-deoxy-L-arabinose (UDP-L-Ara4N) to form UDP-L-4-formamido-arabinose (UDP-L-Ara4FN). The modified arabinose is attached to lipid A and is required for resistance to polymyxin and cationic antimicrobial peptides.</text>
</comment>
<comment type="catalytic activity">
    <reaction evidence="1">
        <text>UDP-alpha-D-glucuronate + NAD(+) = UDP-beta-L-threo-pentopyranos-4-ulose + CO2 + NADH</text>
        <dbReference type="Rhea" id="RHEA:24702"/>
        <dbReference type="ChEBI" id="CHEBI:16526"/>
        <dbReference type="ChEBI" id="CHEBI:57540"/>
        <dbReference type="ChEBI" id="CHEBI:57945"/>
        <dbReference type="ChEBI" id="CHEBI:58052"/>
        <dbReference type="ChEBI" id="CHEBI:58710"/>
        <dbReference type="EC" id="1.1.1.305"/>
    </reaction>
</comment>
<comment type="catalytic activity">
    <reaction evidence="1">
        <text>UDP-4-amino-4-deoxy-beta-L-arabinose + (6R)-10-formyltetrahydrofolate = UDP-4-deoxy-4-formamido-beta-L-arabinose + (6S)-5,6,7,8-tetrahydrofolate + H(+)</text>
        <dbReference type="Rhea" id="RHEA:24706"/>
        <dbReference type="ChEBI" id="CHEBI:15378"/>
        <dbReference type="ChEBI" id="CHEBI:57453"/>
        <dbReference type="ChEBI" id="CHEBI:58708"/>
        <dbReference type="ChEBI" id="CHEBI:58709"/>
        <dbReference type="ChEBI" id="CHEBI:195366"/>
        <dbReference type="EC" id="2.1.2.13"/>
    </reaction>
</comment>
<comment type="pathway">
    <text evidence="1">Nucleotide-sugar biosynthesis; UDP-4-deoxy-4-formamido-beta-L-arabinose biosynthesis; UDP-4-deoxy-4-formamido-beta-L-arabinose from UDP-alpha-D-glucuronate: step 1/3.</text>
</comment>
<comment type="pathway">
    <text evidence="1">Nucleotide-sugar biosynthesis; UDP-4-deoxy-4-formamido-beta-L-arabinose biosynthesis; UDP-4-deoxy-4-formamido-beta-L-arabinose from UDP-alpha-D-glucuronate: step 3/3.</text>
</comment>
<comment type="pathway">
    <text evidence="1">Bacterial outer membrane biogenesis; lipopolysaccharide biosynthesis.</text>
</comment>
<comment type="subunit">
    <text evidence="1">Homohexamer, formed by a dimer of trimers.</text>
</comment>
<comment type="similarity">
    <text evidence="1">In the N-terminal section; belongs to the Fmt family. UDP-L-Ara4N formyltransferase subfamily.</text>
</comment>
<comment type="similarity">
    <text evidence="1">In the C-terminal section; belongs to the NAD(P)-dependent epimerase/dehydratase family. UDP-glucuronic acid decarboxylase subfamily.</text>
</comment>
<sequence length="660" mass="73409">MKAVIFAYHDMGCQGVQAVLDAGYEIAAIFTHADNPAENTFFGSVSRLAAGLGIPVYAPDNVNHPIWIDRIAELAPDIIFSFYYRNLLSEEILHLAPAGAFNLHGSLLPAYRGRAPLNWVLVNGESETGVTLHRMVKRADAGEIVASQRVAIAQDDVALTLHHKLCQAARQLLNSILPTMKCGDIPSVPQRESDATYYGRRRPEDGLIDWHKPVSTVHNLVRAVAAPWPGAFSYNGSQKFTIWSSRICPDAQGALPGSVISVSPLRVACADGALEIITGQAGDGITVQGSQLAQTLGLVAGARLNRPPATSGKRRIRVLILGVNGFIGNHLTERLLNEENYEVYGMDIGSNAISRFLLHPRFHFVEGDISIHSEWIEYHVKKCDVVLPLVAIATPIEYTRNPLRVFELDFEENLRIIRYCVKYRKRVVFPSTSEVYGMCTDASFDEDKSNLIVGPVNKPRWIYSVSKQLLDRVIWAYGEKEGLRFTLFRPFNWMGPRLDSLNAARIGSSRAITQLILNLVEGTPIKLIDGGQQKRCFTDIRDGIEALFRIIVNDGDRCDGKIINIGNPDNEASIQELATLLLDSFDKHPLRCHFPPFAGFQVVESRSYYGKGYQDVAHRKPSIDNARRCLGWEPSIAMRDTVEETLDFFLRSVDVAERAS</sequence>